<protein>
    <recommendedName>
        <fullName evidence="1">Alanine racemase</fullName>
        <ecNumber evidence="1">5.1.1.1</ecNumber>
    </recommendedName>
</protein>
<feature type="chain" id="PRO_1000138614" description="Alanine racemase">
    <location>
        <begin position="1"/>
        <end position="332"/>
    </location>
</feature>
<feature type="active site" description="Proton acceptor; specific for D-alanine" evidence="1">
    <location>
        <position position="33"/>
    </location>
</feature>
<feature type="active site" description="Proton acceptor; specific for L-alanine" evidence="1">
    <location>
        <position position="245"/>
    </location>
</feature>
<feature type="binding site" evidence="1">
    <location>
        <position position="115"/>
    </location>
    <ligand>
        <name>substrate</name>
    </ligand>
</feature>
<feature type="binding site" evidence="1">
    <location>
        <position position="286"/>
    </location>
    <ligand>
        <name>substrate</name>
    </ligand>
</feature>
<feature type="modified residue" description="N6-(pyridoxal phosphate)lysine" evidence="1">
    <location>
        <position position="33"/>
    </location>
</feature>
<sequence length="332" mass="37528">MAYVKLSEKALKHNLETVSKKAGGSDKIAAVLKDNAYGHGIEGFAKKISRLGIKKAVVRTYEEALKIADFFPYILILSDTPRHDSFHYAINDLDTLQVLEPGTKVHLKIDTGMHRNGIALEEIEKAFELLQKNRAHLTGVFTHFRSADELSSELFWQNEQWQTVKQHVIELIKKYNLQKPLFHAANSAALFRLGCEDDFARIGIALYGYTELDDLYEPPALEPVASLWAQKIASRELKKGSRVGYGGVFEAREDMIISTYDAGYADGIFRFQKEIEDGKILGRVSMDSILLEGEKKEICIFSDAKKMARKLGTISYELLVKMPAHLSRTWID</sequence>
<reference key="1">
    <citation type="journal article" date="2007" name="Proc. Natl. Acad. Sci. U.S.A.">
        <title>Deep-sea vent epsilon-proteobacterial genomes provide insights into emergence of pathogens.</title>
        <authorList>
            <person name="Nakagawa S."/>
            <person name="Takaki Y."/>
            <person name="Shimamura S."/>
            <person name="Reysenbach A.-L."/>
            <person name="Takai K."/>
            <person name="Horikoshi K."/>
        </authorList>
    </citation>
    <scope>NUCLEOTIDE SEQUENCE [LARGE SCALE GENOMIC DNA]</scope>
    <source>
        <strain>SB155-2</strain>
    </source>
</reference>
<evidence type="ECO:0000255" key="1">
    <source>
        <dbReference type="HAMAP-Rule" id="MF_01201"/>
    </source>
</evidence>
<name>ALR_NITSB</name>
<gene>
    <name type="primary">alr</name>
    <name type="ordered locus">NIS_0355</name>
</gene>
<comment type="function">
    <text evidence="1">Catalyzes the interconversion of L-alanine and D-alanine. May also act on other amino acids.</text>
</comment>
<comment type="catalytic activity">
    <reaction evidence="1">
        <text>L-alanine = D-alanine</text>
        <dbReference type="Rhea" id="RHEA:20249"/>
        <dbReference type="ChEBI" id="CHEBI:57416"/>
        <dbReference type="ChEBI" id="CHEBI:57972"/>
        <dbReference type="EC" id="5.1.1.1"/>
    </reaction>
</comment>
<comment type="cofactor">
    <cofactor evidence="1">
        <name>pyridoxal 5'-phosphate</name>
        <dbReference type="ChEBI" id="CHEBI:597326"/>
    </cofactor>
</comment>
<comment type="pathway">
    <text evidence="1">Amino-acid biosynthesis; D-alanine biosynthesis; D-alanine from L-alanine: step 1/1.</text>
</comment>
<comment type="similarity">
    <text evidence="1">Belongs to the alanine racemase family.</text>
</comment>
<keyword id="KW-0413">Isomerase</keyword>
<keyword id="KW-0663">Pyridoxal phosphate</keyword>
<keyword id="KW-1185">Reference proteome</keyword>
<dbReference type="EC" id="5.1.1.1" evidence="1"/>
<dbReference type="EMBL" id="AP009178">
    <property type="protein sequence ID" value="BAF69469.1"/>
    <property type="molecule type" value="Genomic_DNA"/>
</dbReference>
<dbReference type="RefSeq" id="WP_012081732.1">
    <property type="nucleotide sequence ID" value="NC_009662.1"/>
</dbReference>
<dbReference type="SMR" id="A6Q1W0"/>
<dbReference type="FunCoup" id="A6Q1W0">
    <property type="interactions" value="333"/>
</dbReference>
<dbReference type="STRING" id="387092.NIS_0355"/>
<dbReference type="KEGG" id="nis:NIS_0355"/>
<dbReference type="eggNOG" id="COG0787">
    <property type="taxonomic scope" value="Bacteria"/>
</dbReference>
<dbReference type="HOGENOM" id="CLU_028393_2_2_7"/>
<dbReference type="InParanoid" id="A6Q1W0"/>
<dbReference type="OrthoDB" id="9813814at2"/>
<dbReference type="UniPathway" id="UPA00042">
    <property type="reaction ID" value="UER00497"/>
</dbReference>
<dbReference type="Proteomes" id="UP000001118">
    <property type="component" value="Chromosome"/>
</dbReference>
<dbReference type="GO" id="GO:0005829">
    <property type="term" value="C:cytosol"/>
    <property type="evidence" value="ECO:0007669"/>
    <property type="project" value="TreeGrafter"/>
</dbReference>
<dbReference type="GO" id="GO:0008784">
    <property type="term" value="F:alanine racemase activity"/>
    <property type="evidence" value="ECO:0007669"/>
    <property type="project" value="UniProtKB-UniRule"/>
</dbReference>
<dbReference type="GO" id="GO:0030170">
    <property type="term" value="F:pyridoxal phosphate binding"/>
    <property type="evidence" value="ECO:0007669"/>
    <property type="project" value="UniProtKB-UniRule"/>
</dbReference>
<dbReference type="GO" id="GO:0030632">
    <property type="term" value="P:D-alanine biosynthetic process"/>
    <property type="evidence" value="ECO:0007669"/>
    <property type="project" value="UniProtKB-UniRule"/>
</dbReference>
<dbReference type="GO" id="GO:0009252">
    <property type="term" value="P:peptidoglycan biosynthetic process"/>
    <property type="evidence" value="ECO:0007669"/>
    <property type="project" value="TreeGrafter"/>
</dbReference>
<dbReference type="CDD" id="cd00430">
    <property type="entry name" value="PLPDE_III_AR"/>
    <property type="match status" value="1"/>
</dbReference>
<dbReference type="Gene3D" id="3.20.20.10">
    <property type="entry name" value="Alanine racemase"/>
    <property type="match status" value="1"/>
</dbReference>
<dbReference type="Gene3D" id="2.40.37.10">
    <property type="entry name" value="Lyase, Ornithine Decarboxylase, Chain A, domain 1"/>
    <property type="match status" value="1"/>
</dbReference>
<dbReference type="HAMAP" id="MF_01201">
    <property type="entry name" value="Ala_racemase"/>
    <property type="match status" value="1"/>
</dbReference>
<dbReference type="InterPro" id="IPR000821">
    <property type="entry name" value="Ala_racemase"/>
</dbReference>
<dbReference type="InterPro" id="IPR009006">
    <property type="entry name" value="Ala_racemase/Decarboxylase_C"/>
</dbReference>
<dbReference type="InterPro" id="IPR011079">
    <property type="entry name" value="Ala_racemase_C"/>
</dbReference>
<dbReference type="InterPro" id="IPR001608">
    <property type="entry name" value="Ala_racemase_N"/>
</dbReference>
<dbReference type="InterPro" id="IPR020622">
    <property type="entry name" value="Ala_racemase_pyridoxalP-BS"/>
</dbReference>
<dbReference type="InterPro" id="IPR029066">
    <property type="entry name" value="PLP-binding_barrel"/>
</dbReference>
<dbReference type="NCBIfam" id="TIGR00492">
    <property type="entry name" value="alr"/>
    <property type="match status" value="1"/>
</dbReference>
<dbReference type="NCBIfam" id="NF000791">
    <property type="entry name" value="PRK00053.2-2"/>
    <property type="match status" value="1"/>
</dbReference>
<dbReference type="PANTHER" id="PTHR30511">
    <property type="entry name" value="ALANINE RACEMASE"/>
    <property type="match status" value="1"/>
</dbReference>
<dbReference type="PANTHER" id="PTHR30511:SF0">
    <property type="entry name" value="ALANINE RACEMASE, CATABOLIC-RELATED"/>
    <property type="match status" value="1"/>
</dbReference>
<dbReference type="Pfam" id="PF00842">
    <property type="entry name" value="Ala_racemase_C"/>
    <property type="match status" value="1"/>
</dbReference>
<dbReference type="Pfam" id="PF01168">
    <property type="entry name" value="Ala_racemase_N"/>
    <property type="match status" value="1"/>
</dbReference>
<dbReference type="PRINTS" id="PR00992">
    <property type="entry name" value="ALARACEMASE"/>
</dbReference>
<dbReference type="SMART" id="SM01005">
    <property type="entry name" value="Ala_racemase_C"/>
    <property type="match status" value="1"/>
</dbReference>
<dbReference type="SUPFAM" id="SSF50621">
    <property type="entry name" value="Alanine racemase C-terminal domain-like"/>
    <property type="match status" value="1"/>
</dbReference>
<dbReference type="SUPFAM" id="SSF51419">
    <property type="entry name" value="PLP-binding barrel"/>
    <property type="match status" value="1"/>
</dbReference>
<dbReference type="PROSITE" id="PS00395">
    <property type="entry name" value="ALANINE_RACEMASE"/>
    <property type="match status" value="1"/>
</dbReference>
<accession>A6Q1W0</accession>
<proteinExistence type="inferred from homology"/>
<organism>
    <name type="scientific">Nitratiruptor sp. (strain SB155-2)</name>
    <dbReference type="NCBI Taxonomy" id="387092"/>
    <lineage>
        <taxon>Bacteria</taxon>
        <taxon>Pseudomonadati</taxon>
        <taxon>Campylobacterota</taxon>
        <taxon>Epsilonproteobacteria</taxon>
        <taxon>Nautiliales</taxon>
        <taxon>Nitratiruptoraceae</taxon>
        <taxon>Nitratiruptor</taxon>
    </lineage>
</organism>